<comment type="function">
    <text evidence="1">Catalyzes the synthesis of GMP from XMP.</text>
</comment>
<comment type="catalytic activity">
    <reaction evidence="1">
        <text>XMP + L-glutamine + ATP + H2O = GMP + L-glutamate + AMP + diphosphate + 2 H(+)</text>
        <dbReference type="Rhea" id="RHEA:11680"/>
        <dbReference type="ChEBI" id="CHEBI:15377"/>
        <dbReference type="ChEBI" id="CHEBI:15378"/>
        <dbReference type="ChEBI" id="CHEBI:29985"/>
        <dbReference type="ChEBI" id="CHEBI:30616"/>
        <dbReference type="ChEBI" id="CHEBI:33019"/>
        <dbReference type="ChEBI" id="CHEBI:57464"/>
        <dbReference type="ChEBI" id="CHEBI:58115"/>
        <dbReference type="ChEBI" id="CHEBI:58359"/>
        <dbReference type="ChEBI" id="CHEBI:456215"/>
        <dbReference type="EC" id="6.3.5.2"/>
    </reaction>
</comment>
<comment type="pathway">
    <text evidence="1">Purine metabolism; GMP biosynthesis; GMP from XMP (L-Gln route): step 1/1.</text>
</comment>
<comment type="subunit">
    <text evidence="1">Homodimer.</text>
</comment>
<reference key="1">
    <citation type="journal article" date="2003" name="Nat. Genet.">
        <title>Comparative analysis of the genome sequences of Bordetella pertussis, Bordetella parapertussis and Bordetella bronchiseptica.</title>
        <authorList>
            <person name="Parkhill J."/>
            <person name="Sebaihia M."/>
            <person name="Preston A."/>
            <person name="Murphy L.D."/>
            <person name="Thomson N.R."/>
            <person name="Harris D.E."/>
            <person name="Holden M.T.G."/>
            <person name="Churcher C.M."/>
            <person name="Bentley S.D."/>
            <person name="Mungall K.L."/>
            <person name="Cerdeno-Tarraga A.-M."/>
            <person name="Temple L."/>
            <person name="James K.D."/>
            <person name="Harris B."/>
            <person name="Quail M.A."/>
            <person name="Achtman M."/>
            <person name="Atkin R."/>
            <person name="Baker S."/>
            <person name="Basham D."/>
            <person name="Bason N."/>
            <person name="Cherevach I."/>
            <person name="Chillingworth T."/>
            <person name="Collins M."/>
            <person name="Cronin A."/>
            <person name="Davis P."/>
            <person name="Doggett J."/>
            <person name="Feltwell T."/>
            <person name="Goble A."/>
            <person name="Hamlin N."/>
            <person name="Hauser H."/>
            <person name="Holroyd S."/>
            <person name="Jagels K."/>
            <person name="Leather S."/>
            <person name="Moule S."/>
            <person name="Norberczak H."/>
            <person name="O'Neil S."/>
            <person name="Ormond D."/>
            <person name="Price C."/>
            <person name="Rabbinowitsch E."/>
            <person name="Rutter S."/>
            <person name="Sanders M."/>
            <person name="Saunders D."/>
            <person name="Seeger K."/>
            <person name="Sharp S."/>
            <person name="Simmonds M."/>
            <person name="Skelton J."/>
            <person name="Squares R."/>
            <person name="Squares S."/>
            <person name="Stevens K."/>
            <person name="Unwin L."/>
            <person name="Whitehead S."/>
            <person name="Barrell B.G."/>
            <person name="Maskell D.J."/>
        </authorList>
    </citation>
    <scope>NUCLEOTIDE SEQUENCE [LARGE SCALE GENOMIC DNA]</scope>
    <source>
        <strain>12822 / ATCC BAA-587 / NCTC 13253</strain>
    </source>
</reference>
<dbReference type="EC" id="6.3.5.2" evidence="1"/>
<dbReference type="EMBL" id="BX640426">
    <property type="protein sequence ID" value="CAE36561.1"/>
    <property type="molecule type" value="Genomic_DNA"/>
</dbReference>
<dbReference type="RefSeq" id="WP_010927932.1">
    <property type="nucleotide sequence ID" value="NC_002928.3"/>
</dbReference>
<dbReference type="SMR" id="Q7WAV6"/>
<dbReference type="MEROPS" id="C26.957"/>
<dbReference type="GeneID" id="93203017"/>
<dbReference type="KEGG" id="bpa:BPP1259"/>
<dbReference type="HOGENOM" id="CLU_014340_0_5_4"/>
<dbReference type="UniPathway" id="UPA00189">
    <property type="reaction ID" value="UER00296"/>
</dbReference>
<dbReference type="Proteomes" id="UP000001421">
    <property type="component" value="Chromosome"/>
</dbReference>
<dbReference type="GO" id="GO:0005829">
    <property type="term" value="C:cytosol"/>
    <property type="evidence" value="ECO:0007669"/>
    <property type="project" value="TreeGrafter"/>
</dbReference>
<dbReference type="GO" id="GO:0005524">
    <property type="term" value="F:ATP binding"/>
    <property type="evidence" value="ECO:0007669"/>
    <property type="project" value="UniProtKB-UniRule"/>
</dbReference>
<dbReference type="GO" id="GO:0003921">
    <property type="term" value="F:GMP synthase activity"/>
    <property type="evidence" value="ECO:0007669"/>
    <property type="project" value="InterPro"/>
</dbReference>
<dbReference type="CDD" id="cd01742">
    <property type="entry name" value="GATase1_GMP_Synthase"/>
    <property type="match status" value="1"/>
</dbReference>
<dbReference type="CDD" id="cd01997">
    <property type="entry name" value="GMP_synthase_C"/>
    <property type="match status" value="1"/>
</dbReference>
<dbReference type="FunFam" id="3.30.300.10:FF:000002">
    <property type="entry name" value="GMP synthase [glutamine-hydrolyzing]"/>
    <property type="match status" value="1"/>
</dbReference>
<dbReference type="FunFam" id="3.40.50.620:FF:000001">
    <property type="entry name" value="GMP synthase [glutamine-hydrolyzing]"/>
    <property type="match status" value="1"/>
</dbReference>
<dbReference type="FunFam" id="3.40.50.880:FF:000001">
    <property type="entry name" value="GMP synthase [glutamine-hydrolyzing]"/>
    <property type="match status" value="1"/>
</dbReference>
<dbReference type="Gene3D" id="3.30.300.10">
    <property type="match status" value="1"/>
</dbReference>
<dbReference type="Gene3D" id="3.40.50.880">
    <property type="match status" value="1"/>
</dbReference>
<dbReference type="Gene3D" id="3.40.50.620">
    <property type="entry name" value="HUPs"/>
    <property type="match status" value="1"/>
</dbReference>
<dbReference type="HAMAP" id="MF_00344">
    <property type="entry name" value="GMP_synthase"/>
    <property type="match status" value="1"/>
</dbReference>
<dbReference type="InterPro" id="IPR029062">
    <property type="entry name" value="Class_I_gatase-like"/>
</dbReference>
<dbReference type="InterPro" id="IPR017926">
    <property type="entry name" value="GATASE"/>
</dbReference>
<dbReference type="InterPro" id="IPR001674">
    <property type="entry name" value="GMP_synth_C"/>
</dbReference>
<dbReference type="InterPro" id="IPR004739">
    <property type="entry name" value="GMP_synth_GATase"/>
</dbReference>
<dbReference type="InterPro" id="IPR022955">
    <property type="entry name" value="GMP_synthase"/>
</dbReference>
<dbReference type="InterPro" id="IPR025777">
    <property type="entry name" value="GMPS_ATP_PPase_dom"/>
</dbReference>
<dbReference type="InterPro" id="IPR022310">
    <property type="entry name" value="NAD/GMP_synthase"/>
</dbReference>
<dbReference type="InterPro" id="IPR014729">
    <property type="entry name" value="Rossmann-like_a/b/a_fold"/>
</dbReference>
<dbReference type="NCBIfam" id="TIGR00884">
    <property type="entry name" value="guaA_Cterm"/>
    <property type="match status" value="1"/>
</dbReference>
<dbReference type="NCBIfam" id="TIGR00888">
    <property type="entry name" value="guaA_Nterm"/>
    <property type="match status" value="1"/>
</dbReference>
<dbReference type="NCBIfam" id="NF000848">
    <property type="entry name" value="PRK00074.1"/>
    <property type="match status" value="1"/>
</dbReference>
<dbReference type="PANTHER" id="PTHR11922:SF2">
    <property type="entry name" value="GMP SYNTHASE [GLUTAMINE-HYDROLYZING]"/>
    <property type="match status" value="1"/>
</dbReference>
<dbReference type="PANTHER" id="PTHR11922">
    <property type="entry name" value="GMP SYNTHASE-RELATED"/>
    <property type="match status" value="1"/>
</dbReference>
<dbReference type="Pfam" id="PF00117">
    <property type="entry name" value="GATase"/>
    <property type="match status" value="1"/>
</dbReference>
<dbReference type="Pfam" id="PF00958">
    <property type="entry name" value="GMP_synt_C"/>
    <property type="match status" value="1"/>
</dbReference>
<dbReference type="Pfam" id="PF02540">
    <property type="entry name" value="NAD_synthase"/>
    <property type="match status" value="1"/>
</dbReference>
<dbReference type="SUPFAM" id="SSF52402">
    <property type="entry name" value="Adenine nucleotide alpha hydrolases-like"/>
    <property type="match status" value="1"/>
</dbReference>
<dbReference type="SUPFAM" id="SSF52317">
    <property type="entry name" value="Class I glutamine amidotransferase-like"/>
    <property type="match status" value="1"/>
</dbReference>
<dbReference type="SUPFAM" id="SSF54810">
    <property type="entry name" value="GMP synthetase C-terminal dimerisation domain"/>
    <property type="match status" value="1"/>
</dbReference>
<dbReference type="PROSITE" id="PS51273">
    <property type="entry name" value="GATASE_TYPE_1"/>
    <property type="match status" value="1"/>
</dbReference>
<dbReference type="PROSITE" id="PS51553">
    <property type="entry name" value="GMPS_ATP_PPASE"/>
    <property type="match status" value="1"/>
</dbReference>
<name>GUAA_BORPA</name>
<sequence>MHQRILILDYGSQVTQLIARRVREAGVYSEIHAGDVDDAFVRDQVAQGLKGIILSGSHASAYEEGSMRVPAAVFEVGVPVLGICYGMQSMAQQLGGTVSFSDHREFGYAEVRAHGHTKLLDGLADFTTDEGHGMLKVWMSHGDKVTELPPGFKLMASTASCPIAGMADEDRGFYAVQFHPEVTHTVQGKAMLARFVKDICGCEGDWNMPDYISEAVARIREQVGSDEVILGLSGGVDSLVAAALIHRAIGDQLTCVFVDHGLLRLDEGKQVMQTFAENMGVKIVHVDATSQFMGKLTGVADPEAKRKIIGREFVEVFQDEAGKLQGAKWLAQGTIYPDVIESAGAKTGKATSIKSHHNVGGLPDTLNLQLLEPLRELFKDEVRELGVALGLPPQMVYRHPFPGPGLGVRILGEVKHEYAELLRRADAIFIEELRNAKDPASGLTWYELTSQAFAVFLPVKSVGVMGDGRTYEYVVALRAVQTFDFMTADWAPLPHPLLARVSSRIINEVRGINRVVYDVSSKPPATIEWE</sequence>
<organism>
    <name type="scientific">Bordetella parapertussis (strain 12822 / ATCC BAA-587 / NCTC 13253)</name>
    <dbReference type="NCBI Taxonomy" id="257311"/>
    <lineage>
        <taxon>Bacteria</taxon>
        <taxon>Pseudomonadati</taxon>
        <taxon>Pseudomonadota</taxon>
        <taxon>Betaproteobacteria</taxon>
        <taxon>Burkholderiales</taxon>
        <taxon>Alcaligenaceae</taxon>
        <taxon>Bordetella</taxon>
    </lineage>
</organism>
<proteinExistence type="inferred from homology"/>
<protein>
    <recommendedName>
        <fullName evidence="1">GMP synthase [glutamine-hydrolyzing]</fullName>
        <ecNumber evidence="1">6.3.5.2</ecNumber>
    </recommendedName>
    <alternativeName>
        <fullName evidence="1">GMP synthetase</fullName>
    </alternativeName>
    <alternativeName>
        <fullName evidence="1">Glutamine amidotransferase</fullName>
    </alternativeName>
</protein>
<accession>Q7WAV6</accession>
<gene>
    <name evidence="1" type="primary">guaA</name>
    <name type="ordered locus">BPP1259</name>
</gene>
<feature type="chain" id="PRO_0000140100" description="GMP synthase [glutamine-hydrolyzing]">
    <location>
        <begin position="1"/>
        <end position="530"/>
    </location>
</feature>
<feature type="domain" description="Glutamine amidotransferase type-1" evidence="1">
    <location>
        <begin position="4"/>
        <end position="205"/>
    </location>
</feature>
<feature type="domain" description="GMPS ATP-PPase" evidence="1">
    <location>
        <begin position="206"/>
        <end position="398"/>
    </location>
</feature>
<feature type="active site" description="Nucleophile" evidence="1">
    <location>
        <position position="84"/>
    </location>
</feature>
<feature type="active site" evidence="1">
    <location>
        <position position="179"/>
    </location>
</feature>
<feature type="active site" evidence="1">
    <location>
        <position position="181"/>
    </location>
</feature>
<feature type="binding site" evidence="1">
    <location>
        <begin position="233"/>
        <end position="239"/>
    </location>
    <ligand>
        <name>ATP</name>
        <dbReference type="ChEBI" id="CHEBI:30616"/>
    </ligand>
</feature>
<keyword id="KW-0067">ATP-binding</keyword>
<keyword id="KW-0315">Glutamine amidotransferase</keyword>
<keyword id="KW-0332">GMP biosynthesis</keyword>
<keyword id="KW-0436">Ligase</keyword>
<keyword id="KW-0547">Nucleotide-binding</keyword>
<keyword id="KW-0658">Purine biosynthesis</keyword>
<evidence type="ECO:0000255" key="1">
    <source>
        <dbReference type="HAMAP-Rule" id="MF_00344"/>
    </source>
</evidence>